<feature type="chain" id="PRO_0000091380" description="Elongation factor Tu">
    <location>
        <begin position="1"/>
        <end position="394"/>
    </location>
</feature>
<feature type="domain" description="tr-type G">
    <location>
        <begin position="10"/>
        <end position="204"/>
    </location>
</feature>
<feature type="region of interest" description="G1" evidence="1">
    <location>
        <begin position="19"/>
        <end position="26"/>
    </location>
</feature>
<feature type="region of interest" description="G2" evidence="1">
    <location>
        <begin position="60"/>
        <end position="64"/>
    </location>
</feature>
<feature type="region of interest" description="G3" evidence="1">
    <location>
        <begin position="81"/>
        <end position="84"/>
    </location>
</feature>
<feature type="region of interest" description="G4" evidence="1">
    <location>
        <begin position="136"/>
        <end position="139"/>
    </location>
</feature>
<feature type="region of interest" description="G5" evidence="1">
    <location>
        <begin position="174"/>
        <end position="176"/>
    </location>
</feature>
<feature type="binding site" evidence="2">
    <location>
        <begin position="19"/>
        <end position="26"/>
    </location>
    <ligand>
        <name>GTP</name>
        <dbReference type="ChEBI" id="CHEBI:37565"/>
    </ligand>
</feature>
<feature type="binding site" evidence="2">
    <location>
        <position position="26"/>
    </location>
    <ligand>
        <name>Mg(2+)</name>
        <dbReference type="ChEBI" id="CHEBI:18420"/>
    </ligand>
</feature>
<feature type="binding site" evidence="2">
    <location>
        <begin position="81"/>
        <end position="85"/>
    </location>
    <ligand>
        <name>GTP</name>
        <dbReference type="ChEBI" id="CHEBI:37565"/>
    </ligand>
</feature>
<feature type="binding site" evidence="2">
    <location>
        <begin position="136"/>
        <end position="139"/>
    </location>
    <ligand>
        <name>GTP</name>
        <dbReference type="ChEBI" id="CHEBI:37565"/>
    </ligand>
</feature>
<proteinExistence type="inferred from homology"/>
<sequence length="394" mass="42933">MAKAKFERTKPHVNIGTIGHVDHGKTSLTAAITIVLAKTGGAQATAYDQIDAAPEEKERGITISTAHVEYETKNRHYAHVDCPGHADYVKNMITGAAQMDGAILVVSAADGPMPQTREHILLAKQVGVPAMVVFLNKIDMVDDPDLLELVEMEVRELLSKYGFPGDEIPIIKGSALQALEGKPEGEKAINELMDAVDSYIPQPVRATDKPFLMPIEDVFSISGRGTVVTGRVESGIIKVGEEIEIVGLKDTQKTTCTGVEMFRKLLDEGQAGDNVGILLRGTKREEVERGQVLAKPGSIKPHDKFEAEVYVLSKEEGGRHTPFTNDYRPQFYFRTTDVTGTIKLPADKQWVMPGDNATFTVELIKPIAMQEGLKFSIREGGRTVGAGVVTKINN</sequence>
<organism>
    <name type="scientific">Rickettsia rickettsii</name>
    <dbReference type="NCBI Taxonomy" id="783"/>
    <lineage>
        <taxon>Bacteria</taxon>
        <taxon>Pseudomonadati</taxon>
        <taxon>Pseudomonadota</taxon>
        <taxon>Alphaproteobacteria</taxon>
        <taxon>Rickettsiales</taxon>
        <taxon>Rickettsiaceae</taxon>
        <taxon>Rickettsieae</taxon>
        <taxon>Rickettsia</taxon>
        <taxon>spotted fever group</taxon>
    </lineage>
</organism>
<accession>P0A3A9</accession>
<accession>Q8KI92</accession>
<evidence type="ECO:0000250" key="1"/>
<evidence type="ECO:0000255" key="2">
    <source>
        <dbReference type="HAMAP-Rule" id="MF_00118"/>
    </source>
</evidence>
<protein>
    <recommendedName>
        <fullName evidence="2">Elongation factor Tu</fullName>
        <shortName evidence="2">EF-Tu</shortName>
        <ecNumber evidence="2">3.6.5.3</ecNumber>
    </recommendedName>
</protein>
<keyword id="KW-0963">Cytoplasm</keyword>
<keyword id="KW-0251">Elongation factor</keyword>
<keyword id="KW-0342">GTP-binding</keyword>
<keyword id="KW-0378">Hydrolase</keyword>
<keyword id="KW-0460">Magnesium</keyword>
<keyword id="KW-0479">Metal-binding</keyword>
<keyword id="KW-0547">Nucleotide-binding</keyword>
<keyword id="KW-0648">Protein biosynthesis</keyword>
<reference key="1">
    <citation type="journal article" date="2002" name="Mol. Biol. Evol.">
        <title>Proliferation and deterioration of Rickettsia palindromic elements.</title>
        <authorList>
            <person name="Amiri H."/>
            <person name="Alsmark C.M."/>
            <person name="Andersson S.G.E."/>
        </authorList>
    </citation>
    <scope>NUCLEOTIDE SEQUENCE [GENOMIC DNA]</scope>
</reference>
<name>EFTU_RICRI</name>
<dbReference type="EC" id="3.6.5.3" evidence="2"/>
<dbReference type="EMBL" id="AF502179">
    <property type="protein sequence ID" value="AAM90930.1"/>
    <property type="molecule type" value="Genomic_DNA"/>
</dbReference>
<dbReference type="SMR" id="P0A3A9"/>
<dbReference type="GO" id="GO:0005737">
    <property type="term" value="C:cytoplasm"/>
    <property type="evidence" value="ECO:0007669"/>
    <property type="project" value="UniProtKB-SubCell"/>
</dbReference>
<dbReference type="GO" id="GO:0005525">
    <property type="term" value="F:GTP binding"/>
    <property type="evidence" value="ECO:0007669"/>
    <property type="project" value="UniProtKB-UniRule"/>
</dbReference>
<dbReference type="GO" id="GO:0003924">
    <property type="term" value="F:GTPase activity"/>
    <property type="evidence" value="ECO:0007669"/>
    <property type="project" value="InterPro"/>
</dbReference>
<dbReference type="GO" id="GO:0097216">
    <property type="term" value="F:guanosine tetraphosphate binding"/>
    <property type="evidence" value="ECO:0007669"/>
    <property type="project" value="UniProtKB-ARBA"/>
</dbReference>
<dbReference type="GO" id="GO:0003746">
    <property type="term" value="F:translation elongation factor activity"/>
    <property type="evidence" value="ECO:0007669"/>
    <property type="project" value="UniProtKB-UniRule"/>
</dbReference>
<dbReference type="CDD" id="cd01884">
    <property type="entry name" value="EF_Tu"/>
    <property type="match status" value="1"/>
</dbReference>
<dbReference type="CDD" id="cd03697">
    <property type="entry name" value="EFTU_II"/>
    <property type="match status" value="1"/>
</dbReference>
<dbReference type="CDD" id="cd03707">
    <property type="entry name" value="EFTU_III"/>
    <property type="match status" value="1"/>
</dbReference>
<dbReference type="FunFam" id="2.40.30.10:FF:000001">
    <property type="entry name" value="Elongation factor Tu"/>
    <property type="match status" value="1"/>
</dbReference>
<dbReference type="FunFam" id="3.40.50.300:FF:000003">
    <property type="entry name" value="Elongation factor Tu"/>
    <property type="match status" value="1"/>
</dbReference>
<dbReference type="Gene3D" id="3.40.50.300">
    <property type="entry name" value="P-loop containing nucleotide triphosphate hydrolases"/>
    <property type="match status" value="1"/>
</dbReference>
<dbReference type="Gene3D" id="2.40.30.10">
    <property type="entry name" value="Translation factors"/>
    <property type="match status" value="2"/>
</dbReference>
<dbReference type="HAMAP" id="MF_00118_B">
    <property type="entry name" value="EF_Tu_B"/>
    <property type="match status" value="1"/>
</dbReference>
<dbReference type="InterPro" id="IPR041709">
    <property type="entry name" value="EF-Tu_GTP-bd"/>
</dbReference>
<dbReference type="InterPro" id="IPR050055">
    <property type="entry name" value="EF-Tu_GTPase"/>
</dbReference>
<dbReference type="InterPro" id="IPR004161">
    <property type="entry name" value="EFTu-like_2"/>
</dbReference>
<dbReference type="InterPro" id="IPR033720">
    <property type="entry name" value="EFTU_2"/>
</dbReference>
<dbReference type="InterPro" id="IPR031157">
    <property type="entry name" value="G_TR_CS"/>
</dbReference>
<dbReference type="InterPro" id="IPR027417">
    <property type="entry name" value="P-loop_NTPase"/>
</dbReference>
<dbReference type="InterPro" id="IPR005225">
    <property type="entry name" value="Small_GTP-bd"/>
</dbReference>
<dbReference type="InterPro" id="IPR000795">
    <property type="entry name" value="T_Tr_GTP-bd_dom"/>
</dbReference>
<dbReference type="InterPro" id="IPR009000">
    <property type="entry name" value="Transl_B-barrel_sf"/>
</dbReference>
<dbReference type="InterPro" id="IPR009001">
    <property type="entry name" value="Transl_elong_EF1A/Init_IF2_C"/>
</dbReference>
<dbReference type="InterPro" id="IPR004541">
    <property type="entry name" value="Transl_elong_EFTu/EF1A_bac/org"/>
</dbReference>
<dbReference type="InterPro" id="IPR004160">
    <property type="entry name" value="Transl_elong_EFTu/EF1A_C"/>
</dbReference>
<dbReference type="NCBIfam" id="TIGR00485">
    <property type="entry name" value="EF-Tu"/>
    <property type="match status" value="1"/>
</dbReference>
<dbReference type="NCBIfam" id="NF000766">
    <property type="entry name" value="PRK00049.1"/>
    <property type="match status" value="1"/>
</dbReference>
<dbReference type="NCBIfam" id="NF009372">
    <property type="entry name" value="PRK12735.1"/>
    <property type="match status" value="1"/>
</dbReference>
<dbReference type="NCBIfam" id="NF009373">
    <property type="entry name" value="PRK12736.1"/>
    <property type="match status" value="1"/>
</dbReference>
<dbReference type="NCBIfam" id="TIGR00231">
    <property type="entry name" value="small_GTP"/>
    <property type="match status" value="1"/>
</dbReference>
<dbReference type="PANTHER" id="PTHR43721:SF22">
    <property type="entry name" value="ELONGATION FACTOR TU, MITOCHONDRIAL"/>
    <property type="match status" value="1"/>
</dbReference>
<dbReference type="PANTHER" id="PTHR43721">
    <property type="entry name" value="ELONGATION FACTOR TU-RELATED"/>
    <property type="match status" value="1"/>
</dbReference>
<dbReference type="Pfam" id="PF00009">
    <property type="entry name" value="GTP_EFTU"/>
    <property type="match status" value="1"/>
</dbReference>
<dbReference type="Pfam" id="PF03144">
    <property type="entry name" value="GTP_EFTU_D2"/>
    <property type="match status" value="1"/>
</dbReference>
<dbReference type="Pfam" id="PF03143">
    <property type="entry name" value="GTP_EFTU_D3"/>
    <property type="match status" value="1"/>
</dbReference>
<dbReference type="PRINTS" id="PR00315">
    <property type="entry name" value="ELONGATNFCT"/>
</dbReference>
<dbReference type="SUPFAM" id="SSF50465">
    <property type="entry name" value="EF-Tu/eEF-1alpha/eIF2-gamma C-terminal domain"/>
    <property type="match status" value="1"/>
</dbReference>
<dbReference type="SUPFAM" id="SSF52540">
    <property type="entry name" value="P-loop containing nucleoside triphosphate hydrolases"/>
    <property type="match status" value="1"/>
</dbReference>
<dbReference type="SUPFAM" id="SSF50447">
    <property type="entry name" value="Translation proteins"/>
    <property type="match status" value="1"/>
</dbReference>
<dbReference type="PROSITE" id="PS00301">
    <property type="entry name" value="G_TR_1"/>
    <property type="match status" value="1"/>
</dbReference>
<dbReference type="PROSITE" id="PS51722">
    <property type="entry name" value="G_TR_2"/>
    <property type="match status" value="1"/>
</dbReference>
<gene>
    <name evidence="2" type="primary">tuf</name>
</gene>
<comment type="function">
    <text evidence="2">GTP hydrolase that promotes the GTP-dependent binding of aminoacyl-tRNA to the A-site of ribosomes during protein biosynthesis.</text>
</comment>
<comment type="catalytic activity">
    <reaction evidence="2">
        <text>GTP + H2O = GDP + phosphate + H(+)</text>
        <dbReference type="Rhea" id="RHEA:19669"/>
        <dbReference type="ChEBI" id="CHEBI:15377"/>
        <dbReference type="ChEBI" id="CHEBI:15378"/>
        <dbReference type="ChEBI" id="CHEBI:37565"/>
        <dbReference type="ChEBI" id="CHEBI:43474"/>
        <dbReference type="ChEBI" id="CHEBI:58189"/>
        <dbReference type="EC" id="3.6.5.3"/>
    </reaction>
    <physiologicalReaction direction="left-to-right" evidence="2">
        <dbReference type="Rhea" id="RHEA:19670"/>
    </physiologicalReaction>
</comment>
<comment type="subunit">
    <text evidence="2">Monomer.</text>
</comment>
<comment type="subcellular location">
    <subcellularLocation>
        <location evidence="2">Cytoplasm</location>
    </subcellularLocation>
</comment>
<comment type="similarity">
    <text evidence="2">Belongs to the TRAFAC class translation factor GTPase superfamily. Classic translation factor GTPase family. EF-Tu/EF-1A subfamily.</text>
</comment>